<keyword id="KW-0028">Amino-acid biosynthesis</keyword>
<keyword id="KW-0413">Isomerase</keyword>
<keyword id="KW-0486">Methionine biosynthesis</keyword>
<keyword id="KW-1185">Reference proteome</keyword>
<sequence>MTLPRSLRWTGDHLDLLDQRCLPHTVVYRQLTHWREVSEAIRSMAVRGAPAIGVAAAWGVVLAAKAGDDLDQAIEGLRASRPTAVNLSWALNRMQTSAKSNGWVDVHQLERLASAIEAEDRALTQALVNHGVGVLPEDCRVLHHCHTGAVATAGVGTALGVIVAGHQRGIVKHAWLDETRPRLQGAALSAWELGCCGVPATVIVDGASGLLMRRGQVDVVLVGCDRVAGNGDVANKIGTYNLALAARAHGVPFYVCAPSSSIDITTVDGDAITIEERPEDEITHFRGELVCASGVRAWNPAFDITPAHLITGLITEFGVIRSPSRESIASLPFAN</sequence>
<organism>
    <name type="scientific">Synechococcus sp. (strain CC9902)</name>
    <dbReference type="NCBI Taxonomy" id="316279"/>
    <lineage>
        <taxon>Bacteria</taxon>
        <taxon>Bacillati</taxon>
        <taxon>Cyanobacteriota</taxon>
        <taxon>Cyanophyceae</taxon>
        <taxon>Synechococcales</taxon>
        <taxon>Synechococcaceae</taxon>
        <taxon>Synechococcus</taxon>
    </lineage>
</organism>
<feature type="chain" id="PRO_0000357251" description="Methylthioribose-1-phosphate isomerase">
    <location>
        <begin position="1"/>
        <end position="335"/>
    </location>
</feature>
<feature type="active site" description="Proton donor" evidence="1">
    <location>
        <position position="225"/>
    </location>
</feature>
<feature type="binding site" evidence="1">
    <location>
        <begin position="47"/>
        <end position="49"/>
    </location>
    <ligand>
        <name>substrate</name>
    </ligand>
</feature>
<feature type="binding site" evidence="1">
    <location>
        <position position="81"/>
    </location>
    <ligand>
        <name>substrate</name>
    </ligand>
</feature>
<feature type="binding site" evidence="1">
    <location>
        <position position="184"/>
    </location>
    <ligand>
        <name>substrate</name>
    </ligand>
</feature>
<feature type="binding site" evidence="1">
    <location>
        <begin position="235"/>
        <end position="236"/>
    </location>
    <ligand>
        <name>substrate</name>
    </ligand>
</feature>
<feature type="site" description="Transition state stabilizer" evidence="1">
    <location>
        <position position="145"/>
    </location>
</feature>
<gene>
    <name evidence="1" type="primary">mtnA</name>
    <name type="ordered locus">Syncc9902_1844</name>
</gene>
<name>MTNA_SYNS9</name>
<proteinExistence type="inferred from homology"/>
<dbReference type="EC" id="5.3.1.23" evidence="1"/>
<dbReference type="EMBL" id="CP000097">
    <property type="protein sequence ID" value="ABB26801.1"/>
    <property type="molecule type" value="Genomic_DNA"/>
</dbReference>
<dbReference type="RefSeq" id="WP_011360605.1">
    <property type="nucleotide sequence ID" value="NC_007513.1"/>
</dbReference>
<dbReference type="SMR" id="Q3AWF5"/>
<dbReference type="STRING" id="316279.Syncc9902_1844"/>
<dbReference type="KEGG" id="sye:Syncc9902_1844"/>
<dbReference type="eggNOG" id="COG0182">
    <property type="taxonomic scope" value="Bacteria"/>
</dbReference>
<dbReference type="HOGENOM" id="CLU_016218_1_2_3"/>
<dbReference type="OrthoDB" id="9803436at2"/>
<dbReference type="UniPathway" id="UPA00904">
    <property type="reaction ID" value="UER00874"/>
</dbReference>
<dbReference type="Proteomes" id="UP000002712">
    <property type="component" value="Chromosome"/>
</dbReference>
<dbReference type="GO" id="GO:0046523">
    <property type="term" value="F:S-methyl-5-thioribose-1-phosphate isomerase activity"/>
    <property type="evidence" value="ECO:0007669"/>
    <property type="project" value="UniProtKB-UniRule"/>
</dbReference>
<dbReference type="GO" id="GO:0019509">
    <property type="term" value="P:L-methionine salvage from methylthioadenosine"/>
    <property type="evidence" value="ECO:0007669"/>
    <property type="project" value="UniProtKB-UniRule"/>
</dbReference>
<dbReference type="FunFam" id="3.40.50.10470:FF:000006">
    <property type="entry name" value="Methylthioribose-1-phosphate isomerase"/>
    <property type="match status" value="1"/>
</dbReference>
<dbReference type="Gene3D" id="1.20.120.420">
    <property type="entry name" value="translation initiation factor eif-2b, domain 1"/>
    <property type="match status" value="1"/>
</dbReference>
<dbReference type="Gene3D" id="3.40.50.10470">
    <property type="entry name" value="Translation initiation factor eif-2b, domain 2"/>
    <property type="match status" value="1"/>
</dbReference>
<dbReference type="HAMAP" id="MF_01678">
    <property type="entry name" value="Salvage_MtnA"/>
    <property type="match status" value="1"/>
</dbReference>
<dbReference type="InterPro" id="IPR000649">
    <property type="entry name" value="IF-2B-related"/>
</dbReference>
<dbReference type="InterPro" id="IPR005251">
    <property type="entry name" value="IF-M1Pi"/>
</dbReference>
<dbReference type="InterPro" id="IPR042529">
    <property type="entry name" value="IF_2B-like_C"/>
</dbReference>
<dbReference type="InterPro" id="IPR011559">
    <property type="entry name" value="Initiation_fac_2B_a/b/d"/>
</dbReference>
<dbReference type="InterPro" id="IPR027363">
    <property type="entry name" value="M1Pi_N"/>
</dbReference>
<dbReference type="InterPro" id="IPR037171">
    <property type="entry name" value="NagB/RpiA_transferase-like"/>
</dbReference>
<dbReference type="NCBIfam" id="TIGR00524">
    <property type="entry name" value="eIF-2B_rel"/>
    <property type="match status" value="1"/>
</dbReference>
<dbReference type="NCBIfam" id="NF004326">
    <property type="entry name" value="PRK05720.1"/>
    <property type="match status" value="1"/>
</dbReference>
<dbReference type="NCBIfam" id="TIGR00512">
    <property type="entry name" value="salvage_mtnA"/>
    <property type="match status" value="1"/>
</dbReference>
<dbReference type="PANTHER" id="PTHR43475">
    <property type="entry name" value="METHYLTHIORIBOSE-1-PHOSPHATE ISOMERASE"/>
    <property type="match status" value="1"/>
</dbReference>
<dbReference type="PANTHER" id="PTHR43475:SF1">
    <property type="entry name" value="METHYLTHIORIBOSE-1-PHOSPHATE ISOMERASE"/>
    <property type="match status" value="1"/>
</dbReference>
<dbReference type="Pfam" id="PF01008">
    <property type="entry name" value="IF-2B"/>
    <property type="match status" value="1"/>
</dbReference>
<dbReference type="SUPFAM" id="SSF100950">
    <property type="entry name" value="NagB/RpiA/CoA transferase-like"/>
    <property type="match status" value="1"/>
</dbReference>
<accession>Q3AWF5</accession>
<comment type="function">
    <text evidence="1">Catalyzes the interconversion of methylthioribose-1-phosphate (MTR-1-P) into methylthioribulose-1-phosphate (MTRu-1-P).</text>
</comment>
<comment type="catalytic activity">
    <reaction evidence="1">
        <text>5-(methylsulfanyl)-alpha-D-ribose 1-phosphate = 5-(methylsulfanyl)-D-ribulose 1-phosphate</text>
        <dbReference type="Rhea" id="RHEA:19989"/>
        <dbReference type="ChEBI" id="CHEBI:58533"/>
        <dbReference type="ChEBI" id="CHEBI:58548"/>
        <dbReference type="EC" id="5.3.1.23"/>
    </reaction>
</comment>
<comment type="pathway">
    <text evidence="1">Amino-acid biosynthesis; L-methionine biosynthesis via salvage pathway; L-methionine from S-methyl-5-thio-alpha-D-ribose 1-phosphate: step 1/6.</text>
</comment>
<comment type="similarity">
    <text evidence="2">Belongs to the eIF-2B alpha/beta/delta subunits family. MtnA subfamily.</text>
</comment>
<protein>
    <recommendedName>
        <fullName evidence="1">Methylthioribose-1-phosphate isomerase</fullName>
        <shortName evidence="1">M1Pi</shortName>
        <shortName evidence="1">MTR-1-P isomerase</shortName>
        <ecNumber evidence="1">5.3.1.23</ecNumber>
    </recommendedName>
    <alternativeName>
        <fullName evidence="1">S-methyl-5-thioribose-1-phosphate isomerase</fullName>
    </alternativeName>
</protein>
<evidence type="ECO:0000255" key="1">
    <source>
        <dbReference type="HAMAP-Rule" id="MF_01678"/>
    </source>
</evidence>
<evidence type="ECO:0000305" key="2"/>
<reference key="1">
    <citation type="submission" date="2005-08" db="EMBL/GenBank/DDBJ databases">
        <title>Complete sequence of Synechococcus sp. CC9902.</title>
        <authorList>
            <person name="Copeland A."/>
            <person name="Lucas S."/>
            <person name="Lapidus A."/>
            <person name="Barry K."/>
            <person name="Detter J.C."/>
            <person name="Glavina T."/>
            <person name="Hammon N."/>
            <person name="Israni S."/>
            <person name="Pitluck S."/>
            <person name="Martinez M."/>
            <person name="Schmutz J."/>
            <person name="Larimer F."/>
            <person name="Land M."/>
            <person name="Kyrpides N."/>
            <person name="Ivanova N."/>
            <person name="Richardson P."/>
        </authorList>
    </citation>
    <scope>NUCLEOTIDE SEQUENCE [LARGE SCALE GENOMIC DNA]</scope>
    <source>
        <strain>CC9902</strain>
    </source>
</reference>